<sequence length="222" mass="24501">MKKHLLPLALLFSGISPAQALDVGDISSFMNSDSSTLSKTIQNSTDSGRLINIRLERLSSPLDDGQVIAMDKPDELLLTPASLLLPAQASEVIRFFYKGPADEKERYYRIVWFDQALSDAQRDNANRSAVATASARIGTILVVAPRQANYHFQYANGSLTNTGNATLRILAYGPCLKAANGKECKENYYLMPGKSRRFTRVDTADNKGRVALWQGDKFIPVK</sequence>
<evidence type="ECO:0000250" key="1"/>
<evidence type="ECO:0000255" key="2"/>
<evidence type="ECO:0000269" key="3">
    <source>
    </source>
</evidence>
<evidence type="ECO:0000305" key="4"/>
<proteinExistence type="evidence at transcript level"/>
<reference key="1">
    <citation type="journal article" date="2009" name="J. Bacteriol.">
        <title>Complete genome sequence and comparative genome analysis of enteropathogenic Escherichia coli O127:H6 strain E2348/69.</title>
        <authorList>
            <person name="Iguchi A."/>
            <person name="Thomson N.R."/>
            <person name="Ogura Y."/>
            <person name="Saunders D."/>
            <person name="Ooka T."/>
            <person name="Henderson I.R."/>
            <person name="Harris D."/>
            <person name="Asadulghani M."/>
            <person name="Kurokawa K."/>
            <person name="Dean P."/>
            <person name="Kenny B."/>
            <person name="Quail M.A."/>
            <person name="Thurston S."/>
            <person name="Dougan G."/>
            <person name="Hayashi T."/>
            <person name="Parkhill J."/>
            <person name="Frankel G."/>
        </authorList>
    </citation>
    <scope>NUCLEOTIDE SEQUENCE [LARGE SCALE GENOMIC DNA]</scope>
    <source>
        <strain>E2348/69 / EPEC</strain>
    </source>
</reference>
<reference key="2">
    <citation type="journal article" date="2012" name="J. Bacteriol.">
        <title>Transcriptional regulation of the ecp operon by EcpR, IHF, and H-NS in attaching and effacing Escherichia coli.</title>
        <authorList>
            <person name="Martinez-Santos V.I."/>
            <person name="Medrano-Lopez A."/>
            <person name="Saldana Z."/>
            <person name="Giron J.A."/>
            <person name="Puente J.L."/>
        </authorList>
    </citation>
    <scope>INDUCTION</scope>
    <source>
        <strain>E2348/69 / EPEC</strain>
    </source>
</reference>
<feature type="signal peptide" evidence="2">
    <location>
        <begin position="1"/>
        <end position="20"/>
    </location>
</feature>
<feature type="chain" id="PRO_0000429478" description="Probable fimbrial chaperone EcpB">
    <location>
        <begin position="21"/>
        <end position="222"/>
    </location>
</feature>
<comment type="function">
    <text evidence="1">Part of the ecpRABCDE operon, which encodes the E.coli common pilus (ECP). ECP is found in both commensal and pathogenic strains and plays a dual role in early-stage biofilm development and host cell recognition (By similarity).</text>
</comment>
<comment type="induction">
    <text evidence="3">Negatively regulated by H-NS. Positively regulated by IHF and EcpR.</text>
</comment>
<comment type="similarity">
    <text evidence="4">Belongs to the EcpB/EcpE family.</text>
</comment>
<name>ECPB_ECO27</name>
<accession>B7UJE0</accession>
<protein>
    <recommendedName>
        <fullName>Probable fimbrial chaperone EcpB</fullName>
    </recommendedName>
</protein>
<gene>
    <name type="primary">ecpB</name>
    <name type="ordered locus">E2348C_0248</name>
</gene>
<keyword id="KW-0143">Chaperone</keyword>
<keyword id="KW-1029">Fimbrium biogenesis</keyword>
<keyword id="KW-1185">Reference proteome</keyword>
<keyword id="KW-0732">Signal</keyword>
<organism>
    <name type="scientific">Escherichia coli O127:H6 (strain E2348/69 / EPEC)</name>
    <dbReference type="NCBI Taxonomy" id="574521"/>
    <lineage>
        <taxon>Bacteria</taxon>
        <taxon>Pseudomonadati</taxon>
        <taxon>Pseudomonadota</taxon>
        <taxon>Gammaproteobacteria</taxon>
        <taxon>Enterobacterales</taxon>
        <taxon>Enterobacteriaceae</taxon>
        <taxon>Escherichia</taxon>
    </lineage>
</organism>
<dbReference type="EMBL" id="FM180568">
    <property type="protein sequence ID" value="CAS07796.1"/>
    <property type="molecule type" value="Genomic_DNA"/>
</dbReference>
<dbReference type="RefSeq" id="WP_000716404.1">
    <property type="nucleotide sequence ID" value="NC_011601.1"/>
</dbReference>
<dbReference type="SMR" id="B7UJE0"/>
<dbReference type="KEGG" id="ecg:E2348C_0248"/>
<dbReference type="HOGENOM" id="CLU_106652_0_0_6"/>
<dbReference type="Proteomes" id="UP000008205">
    <property type="component" value="Chromosome"/>
</dbReference>
<dbReference type="Gene3D" id="2.60.40.10">
    <property type="entry name" value="Immunoglobulins"/>
    <property type="match status" value="1"/>
</dbReference>
<dbReference type="InterPro" id="IPR040695">
    <property type="entry name" value="EcpB_C"/>
</dbReference>
<dbReference type="InterPro" id="IPR013783">
    <property type="entry name" value="Ig-like_fold"/>
</dbReference>
<dbReference type="InterPro" id="IPR008962">
    <property type="entry name" value="PapD-like_sf"/>
</dbReference>
<dbReference type="Pfam" id="PF18649">
    <property type="entry name" value="EcpB_C"/>
    <property type="match status" value="1"/>
</dbReference>
<dbReference type="SUPFAM" id="SSF49354">
    <property type="entry name" value="PapD-like"/>
    <property type="match status" value="1"/>
</dbReference>